<accession>P47153</accession>
<accession>D6VWT5</accession>
<dbReference type="EMBL" id="Z49616">
    <property type="protein sequence ID" value="CAA89646.1"/>
    <property type="molecule type" value="Genomic_DNA"/>
</dbReference>
<dbReference type="EMBL" id="BK006943">
    <property type="protein sequence ID" value="DAA08901.1"/>
    <property type="molecule type" value="Genomic_DNA"/>
</dbReference>
<dbReference type="PIR" id="S57139">
    <property type="entry name" value="S57139"/>
</dbReference>
<dbReference type="RefSeq" id="NP_012650.1">
    <property type="nucleotide sequence ID" value="NM_001181774.1"/>
</dbReference>
<dbReference type="BioGRID" id="33872">
    <property type="interactions" value="43"/>
</dbReference>
<dbReference type="DIP" id="DIP-4077N"/>
<dbReference type="FunCoup" id="P47153">
    <property type="interactions" value="139"/>
</dbReference>
<dbReference type="IntAct" id="P47153">
    <property type="interactions" value="2"/>
</dbReference>
<dbReference type="STRING" id="4932.YJR116W"/>
<dbReference type="PaxDb" id="4932-YJR116W"/>
<dbReference type="PeptideAtlas" id="P47153"/>
<dbReference type="EnsemblFungi" id="YJR116W_mRNA">
    <property type="protein sequence ID" value="YJR116W"/>
    <property type="gene ID" value="YJR116W"/>
</dbReference>
<dbReference type="GeneID" id="853580"/>
<dbReference type="KEGG" id="sce:YJR116W"/>
<dbReference type="AGR" id="SGD:S000003877"/>
<dbReference type="SGD" id="S000003877">
    <property type="gene designation" value="TDA4"/>
</dbReference>
<dbReference type="VEuPathDB" id="FungiDB:YJR116W"/>
<dbReference type="eggNOG" id="KOG4561">
    <property type="taxonomic scope" value="Eukaryota"/>
</dbReference>
<dbReference type="GeneTree" id="ENSGT01010000222313"/>
<dbReference type="HOGENOM" id="CLU_034597_0_1_1"/>
<dbReference type="InParanoid" id="P47153"/>
<dbReference type="OMA" id="MPVYYSH"/>
<dbReference type="OrthoDB" id="10266980at2759"/>
<dbReference type="BioCyc" id="YEAST:G3O-31738-MONOMER"/>
<dbReference type="BioGRID-ORCS" id="853580">
    <property type="hits" value="4 hits in 10 CRISPR screens"/>
</dbReference>
<dbReference type="PRO" id="PR:P47153"/>
<dbReference type="Proteomes" id="UP000002311">
    <property type="component" value="Chromosome X"/>
</dbReference>
<dbReference type="RNAct" id="P47153">
    <property type="molecule type" value="protein"/>
</dbReference>
<dbReference type="GO" id="GO:0005783">
    <property type="term" value="C:endoplasmic reticulum"/>
    <property type="evidence" value="ECO:0007005"/>
    <property type="project" value="SGD"/>
</dbReference>
<dbReference type="GO" id="GO:0016020">
    <property type="term" value="C:membrane"/>
    <property type="evidence" value="ECO:0007669"/>
    <property type="project" value="UniProtKB-SubCell"/>
</dbReference>
<dbReference type="GO" id="GO:0055088">
    <property type="term" value="P:lipid homeostasis"/>
    <property type="evidence" value="ECO:0000318"/>
    <property type="project" value="GO_Central"/>
</dbReference>
<dbReference type="InterPro" id="IPR006634">
    <property type="entry name" value="TLC-dom"/>
</dbReference>
<dbReference type="InterPro" id="IPR050846">
    <property type="entry name" value="TLCD"/>
</dbReference>
<dbReference type="PANTHER" id="PTHR13439">
    <property type="entry name" value="CT120 PROTEIN"/>
    <property type="match status" value="1"/>
</dbReference>
<dbReference type="PANTHER" id="PTHR13439:SF0">
    <property type="entry name" value="TOPOISOMERASE I DAMAGE AFFECTED PROTEIN 4"/>
    <property type="match status" value="1"/>
</dbReference>
<dbReference type="Pfam" id="PF03798">
    <property type="entry name" value="TRAM_LAG1_CLN8"/>
    <property type="match status" value="1"/>
</dbReference>
<dbReference type="SMART" id="SM00724">
    <property type="entry name" value="TLC"/>
    <property type="match status" value="1"/>
</dbReference>
<dbReference type="PROSITE" id="PS50922">
    <property type="entry name" value="TLC"/>
    <property type="match status" value="1"/>
</dbReference>
<protein>
    <recommendedName>
        <fullName>Topoisomerase I damage affected protein 4</fullName>
    </recommendedName>
</protein>
<proteinExistence type="evidence at protein level"/>
<organism>
    <name type="scientific">Saccharomyces cerevisiae (strain ATCC 204508 / S288c)</name>
    <name type="common">Baker's yeast</name>
    <dbReference type="NCBI Taxonomy" id="559292"/>
    <lineage>
        <taxon>Eukaryota</taxon>
        <taxon>Fungi</taxon>
        <taxon>Dikarya</taxon>
        <taxon>Ascomycota</taxon>
        <taxon>Saccharomycotina</taxon>
        <taxon>Saccharomycetes</taxon>
        <taxon>Saccharomycetales</taxon>
        <taxon>Saccharomycetaceae</taxon>
        <taxon>Saccharomyces</taxon>
    </lineage>
</organism>
<comment type="subcellular location">
    <subcellularLocation>
        <location>Membrane</location>
        <topology>Multi-pass membrane protein</topology>
    </subcellularLocation>
</comment>
<comment type="disruption phenotype">
    <text evidence="3">Leads to cell death when overexpressing the camptothecin mimetic TOP1-T(722)A mutant.</text>
</comment>
<comment type="similarity">
    <text evidence="4">Belongs to the TMEM56 family.</text>
</comment>
<keyword id="KW-0472">Membrane</keyword>
<keyword id="KW-1185">Reference proteome</keyword>
<keyword id="KW-0812">Transmembrane</keyword>
<keyword id="KW-1133">Transmembrane helix</keyword>
<feature type="chain" id="PRO_0000185544" description="Topoisomerase I damage affected protein 4">
    <location>
        <begin position="1"/>
        <end position="279"/>
    </location>
</feature>
<feature type="topological domain" description="Extracellular" evidence="1">
    <location>
        <begin position="1"/>
        <end position="32"/>
    </location>
</feature>
<feature type="transmembrane region" description="Helical" evidence="1">
    <location>
        <begin position="33"/>
        <end position="53"/>
    </location>
</feature>
<feature type="topological domain" description="Cytoplasmic" evidence="1">
    <location>
        <begin position="54"/>
        <end position="79"/>
    </location>
</feature>
<feature type="transmembrane region" description="Helical" evidence="1">
    <location>
        <begin position="80"/>
        <end position="100"/>
    </location>
</feature>
<feature type="topological domain" description="Extracellular" evidence="1">
    <location>
        <begin position="101"/>
        <end position="110"/>
    </location>
</feature>
<feature type="transmembrane region" description="Helical" evidence="1">
    <location>
        <begin position="111"/>
        <end position="131"/>
    </location>
</feature>
<feature type="topological domain" description="Cytoplasmic" evidence="1">
    <location>
        <begin position="132"/>
        <end position="135"/>
    </location>
</feature>
<feature type="transmembrane region" description="Helical" evidence="1">
    <location>
        <begin position="136"/>
        <end position="156"/>
    </location>
</feature>
<feature type="topological domain" description="Extracellular" evidence="1">
    <location>
        <begin position="157"/>
        <end position="162"/>
    </location>
</feature>
<feature type="transmembrane region" description="Helical" evidence="1">
    <location>
        <begin position="163"/>
        <end position="183"/>
    </location>
</feature>
<feature type="topological domain" description="Cytoplasmic" evidence="1">
    <location>
        <begin position="184"/>
        <end position="192"/>
    </location>
</feature>
<feature type="transmembrane region" description="Helical" evidence="1">
    <location>
        <begin position="193"/>
        <end position="213"/>
    </location>
</feature>
<feature type="topological domain" description="Extracellular" evidence="1">
    <location>
        <begin position="214"/>
        <end position="238"/>
    </location>
</feature>
<feature type="transmembrane region" description="Helical" evidence="1">
    <location>
        <begin position="239"/>
        <end position="259"/>
    </location>
</feature>
<feature type="topological domain" description="Cytoplasmic" evidence="1">
    <location>
        <begin position="260"/>
        <end position="279"/>
    </location>
</feature>
<feature type="domain" description="TLC" evidence="2">
    <location>
        <begin position="70"/>
        <end position="271"/>
    </location>
</feature>
<reference key="1">
    <citation type="journal article" date="1996" name="EMBO J.">
        <title>Complete nucleotide sequence of Saccharomyces cerevisiae chromosome X.</title>
        <authorList>
            <person name="Galibert F."/>
            <person name="Alexandraki D."/>
            <person name="Baur A."/>
            <person name="Boles E."/>
            <person name="Chalwatzis N."/>
            <person name="Chuat J.-C."/>
            <person name="Coster F."/>
            <person name="Cziepluch C."/>
            <person name="de Haan M."/>
            <person name="Domdey H."/>
            <person name="Durand P."/>
            <person name="Entian K.-D."/>
            <person name="Gatius M."/>
            <person name="Goffeau A."/>
            <person name="Grivell L.A."/>
            <person name="Hennemann A."/>
            <person name="Herbert C.J."/>
            <person name="Heumann K."/>
            <person name="Hilger F."/>
            <person name="Hollenberg C.P."/>
            <person name="Huang M.-E."/>
            <person name="Jacq C."/>
            <person name="Jauniaux J.-C."/>
            <person name="Katsoulou C."/>
            <person name="Kirchrath L."/>
            <person name="Kleine K."/>
            <person name="Kordes E."/>
            <person name="Koetter P."/>
            <person name="Liebl S."/>
            <person name="Louis E.J."/>
            <person name="Manus V."/>
            <person name="Mewes H.-W."/>
            <person name="Miosga T."/>
            <person name="Obermaier B."/>
            <person name="Perea J."/>
            <person name="Pohl T.M."/>
            <person name="Portetelle D."/>
            <person name="Pujol A."/>
            <person name="Purnelle B."/>
            <person name="Ramezani Rad M."/>
            <person name="Rasmussen S.W."/>
            <person name="Rose M."/>
            <person name="Rossau R."/>
            <person name="Schaaff-Gerstenschlaeger I."/>
            <person name="Smits P.H.M."/>
            <person name="Scarcez T."/>
            <person name="Soriano N."/>
            <person name="To Van D."/>
            <person name="Tzermia M."/>
            <person name="Van Broekhoven A."/>
            <person name="Vandenbol M."/>
            <person name="Wedler H."/>
            <person name="von Wettstein D."/>
            <person name="Wambutt R."/>
            <person name="Zagulski M."/>
            <person name="Zollner A."/>
            <person name="Karpfinger-Hartl L."/>
        </authorList>
    </citation>
    <scope>NUCLEOTIDE SEQUENCE [LARGE SCALE GENOMIC DNA]</scope>
    <source>
        <strain>ATCC 204508 / S288c</strain>
    </source>
</reference>
<reference key="2">
    <citation type="journal article" date="2014" name="G3 (Bethesda)">
        <title>The reference genome sequence of Saccharomyces cerevisiae: Then and now.</title>
        <authorList>
            <person name="Engel S.R."/>
            <person name="Dietrich F.S."/>
            <person name="Fisk D.G."/>
            <person name="Binkley G."/>
            <person name="Balakrishnan R."/>
            <person name="Costanzo M.C."/>
            <person name="Dwight S.S."/>
            <person name="Hitz B.C."/>
            <person name="Karra K."/>
            <person name="Nash R.S."/>
            <person name="Weng S."/>
            <person name="Wong E.D."/>
            <person name="Lloyd P."/>
            <person name="Skrzypek M.S."/>
            <person name="Miyasato S.R."/>
            <person name="Simison M."/>
            <person name="Cherry J.M."/>
        </authorList>
    </citation>
    <scope>GENOME REANNOTATION</scope>
    <source>
        <strain>ATCC 204508 / S288c</strain>
    </source>
</reference>
<reference key="3">
    <citation type="journal article" date="2006" name="Proc. Natl. Acad. Sci. U.S.A.">
        <title>A global topology map of the Saccharomyces cerevisiae membrane proteome.</title>
        <authorList>
            <person name="Kim H."/>
            <person name="Melen K."/>
            <person name="Oesterberg M."/>
            <person name="von Heijne G."/>
        </authorList>
    </citation>
    <scope>TOPOLOGY [LARGE SCALE ANALYSIS]</scope>
    <source>
        <strain>ATCC 208353 / W303-1A</strain>
    </source>
</reference>
<reference key="4">
    <citation type="journal article" date="2011" name="Genome Res.">
        <title>Selective ploidy ablation, a high-throughput plasmid transfer protocol, identifies new genes affecting topoisomerase I-induced DNA damage.</title>
        <authorList>
            <person name="Reid R.J."/>
            <person name="Gonzalez-Barrera S."/>
            <person name="Sunjevaric I."/>
            <person name="Alvaro D."/>
            <person name="Ciccone S."/>
            <person name="Wagner M."/>
            <person name="Rothstein R."/>
        </authorList>
    </citation>
    <scope>DISRUPTION PHENOTYPE</scope>
</reference>
<evidence type="ECO:0000255" key="1"/>
<evidence type="ECO:0000255" key="2">
    <source>
        <dbReference type="PROSITE-ProRule" id="PRU00205"/>
    </source>
</evidence>
<evidence type="ECO:0000269" key="3">
    <source>
    </source>
</evidence>
<evidence type="ECO:0000305" key="4"/>
<sequence>MNANSTTTAIGLTSPFEKLSFFPHSSNLILAHLHEIIFSFVFYQLAFSVVAPFLNKVVFRKHYTTIRDPLLKIDFNVHTVSMIQAVVSNTVLLPTLTTPMHYNVVTYTDSYSSMVSSLSAGYFIWDLTMCVRYFKLYGLEFTGHAIGSVYVMLLSLRPFCQPWIGRFLIYEASTPFVNINWFIMQCNAKSKNSIPLWFNVVNGLLLMTVFFVVRICWGSIASALLFRQMWKVRDELPKFSAVTMMSLNIFMNLLNVLWFKKMIRIAKKLAKPAPTSKLD</sequence>
<gene>
    <name type="primary">TDA4</name>
    <name type="ordered locus">YJR116W</name>
    <name type="ORF">J2031</name>
</gene>
<name>TDA4_YEAST</name>